<reference key="1">
    <citation type="journal article" date="2004" name="Nat. Biotechnol.">
        <title>The genome sequence of the capnophilic rumen bacterium Mannheimia succiniciproducens.</title>
        <authorList>
            <person name="Hong S.H."/>
            <person name="Kim J.S."/>
            <person name="Lee S.Y."/>
            <person name="In Y.H."/>
            <person name="Choi S.S."/>
            <person name="Rih J.-K."/>
            <person name="Kim C.H."/>
            <person name="Jeong H."/>
            <person name="Hur C.G."/>
            <person name="Kim J.J."/>
        </authorList>
    </citation>
    <scope>NUCLEOTIDE SEQUENCE [LARGE SCALE GENOMIC DNA]</scope>
    <source>
        <strain>KCTC 0769BP / MBEL55E</strain>
    </source>
</reference>
<feature type="chain" id="PRO_0000236126" description="DNA replication and repair protein RecF">
    <location>
        <begin position="1"/>
        <end position="360"/>
    </location>
</feature>
<feature type="binding site" evidence="1">
    <location>
        <begin position="30"/>
        <end position="37"/>
    </location>
    <ligand>
        <name>ATP</name>
        <dbReference type="ChEBI" id="CHEBI:30616"/>
    </ligand>
</feature>
<organism>
    <name type="scientific">Mannheimia succiniciproducens (strain KCTC 0769BP / MBEL55E)</name>
    <dbReference type="NCBI Taxonomy" id="221988"/>
    <lineage>
        <taxon>Bacteria</taxon>
        <taxon>Pseudomonadati</taxon>
        <taxon>Pseudomonadota</taxon>
        <taxon>Gammaproteobacteria</taxon>
        <taxon>Pasteurellales</taxon>
        <taxon>Pasteurellaceae</taxon>
        <taxon>Basfia</taxon>
    </lineage>
</organism>
<proteinExistence type="inferred from homology"/>
<accession>Q65VB6</accession>
<dbReference type="EMBL" id="AE016827">
    <property type="protein sequence ID" value="AAU37094.1"/>
    <property type="molecule type" value="Genomic_DNA"/>
</dbReference>
<dbReference type="RefSeq" id="WP_011199667.1">
    <property type="nucleotide sequence ID" value="NC_006300.1"/>
</dbReference>
<dbReference type="SMR" id="Q65VB6"/>
<dbReference type="STRING" id="221988.MS0487"/>
<dbReference type="KEGG" id="msu:MS0487"/>
<dbReference type="eggNOG" id="COG1195">
    <property type="taxonomic scope" value="Bacteria"/>
</dbReference>
<dbReference type="HOGENOM" id="CLU_040267_0_0_6"/>
<dbReference type="OrthoDB" id="9803889at2"/>
<dbReference type="Proteomes" id="UP000000607">
    <property type="component" value="Chromosome"/>
</dbReference>
<dbReference type="GO" id="GO:0005737">
    <property type="term" value="C:cytoplasm"/>
    <property type="evidence" value="ECO:0007669"/>
    <property type="project" value="UniProtKB-SubCell"/>
</dbReference>
<dbReference type="GO" id="GO:0005524">
    <property type="term" value="F:ATP binding"/>
    <property type="evidence" value="ECO:0007669"/>
    <property type="project" value="UniProtKB-UniRule"/>
</dbReference>
<dbReference type="GO" id="GO:0003697">
    <property type="term" value="F:single-stranded DNA binding"/>
    <property type="evidence" value="ECO:0007669"/>
    <property type="project" value="UniProtKB-UniRule"/>
</dbReference>
<dbReference type="GO" id="GO:0006260">
    <property type="term" value="P:DNA replication"/>
    <property type="evidence" value="ECO:0007669"/>
    <property type="project" value="UniProtKB-UniRule"/>
</dbReference>
<dbReference type="GO" id="GO:0000731">
    <property type="term" value="P:DNA synthesis involved in DNA repair"/>
    <property type="evidence" value="ECO:0007669"/>
    <property type="project" value="TreeGrafter"/>
</dbReference>
<dbReference type="GO" id="GO:0006302">
    <property type="term" value="P:double-strand break repair"/>
    <property type="evidence" value="ECO:0007669"/>
    <property type="project" value="TreeGrafter"/>
</dbReference>
<dbReference type="GO" id="GO:0009432">
    <property type="term" value="P:SOS response"/>
    <property type="evidence" value="ECO:0007669"/>
    <property type="project" value="UniProtKB-UniRule"/>
</dbReference>
<dbReference type="FunFam" id="1.20.1050.90:FF:000001">
    <property type="entry name" value="DNA replication and repair protein RecF"/>
    <property type="match status" value="1"/>
</dbReference>
<dbReference type="Gene3D" id="3.40.50.300">
    <property type="entry name" value="P-loop containing nucleotide triphosphate hydrolases"/>
    <property type="match status" value="1"/>
</dbReference>
<dbReference type="Gene3D" id="1.20.1050.90">
    <property type="entry name" value="RecF/RecN/SMC, N-terminal domain"/>
    <property type="match status" value="1"/>
</dbReference>
<dbReference type="HAMAP" id="MF_00365">
    <property type="entry name" value="RecF"/>
    <property type="match status" value="1"/>
</dbReference>
<dbReference type="InterPro" id="IPR001238">
    <property type="entry name" value="DNA-binding_RecF"/>
</dbReference>
<dbReference type="InterPro" id="IPR018078">
    <property type="entry name" value="DNA-binding_RecF_CS"/>
</dbReference>
<dbReference type="InterPro" id="IPR027417">
    <property type="entry name" value="P-loop_NTPase"/>
</dbReference>
<dbReference type="InterPro" id="IPR003395">
    <property type="entry name" value="RecF/RecN/SMC_N"/>
</dbReference>
<dbReference type="InterPro" id="IPR042174">
    <property type="entry name" value="RecF_2"/>
</dbReference>
<dbReference type="NCBIfam" id="TIGR00611">
    <property type="entry name" value="recf"/>
    <property type="match status" value="1"/>
</dbReference>
<dbReference type="PANTHER" id="PTHR32182">
    <property type="entry name" value="DNA REPLICATION AND REPAIR PROTEIN RECF"/>
    <property type="match status" value="1"/>
</dbReference>
<dbReference type="PANTHER" id="PTHR32182:SF0">
    <property type="entry name" value="DNA REPLICATION AND REPAIR PROTEIN RECF"/>
    <property type="match status" value="1"/>
</dbReference>
<dbReference type="Pfam" id="PF02463">
    <property type="entry name" value="SMC_N"/>
    <property type="match status" value="1"/>
</dbReference>
<dbReference type="SUPFAM" id="SSF52540">
    <property type="entry name" value="P-loop containing nucleoside triphosphate hydrolases"/>
    <property type="match status" value="1"/>
</dbReference>
<dbReference type="PROSITE" id="PS00617">
    <property type="entry name" value="RECF_1"/>
    <property type="match status" value="1"/>
</dbReference>
<dbReference type="PROSITE" id="PS00618">
    <property type="entry name" value="RECF_2"/>
    <property type="match status" value="1"/>
</dbReference>
<gene>
    <name evidence="1" type="primary">recF</name>
    <name type="ordered locus">MS0487</name>
</gene>
<name>RECF_MANSM</name>
<protein>
    <recommendedName>
        <fullName evidence="1">DNA replication and repair protein RecF</fullName>
    </recommendedName>
</protein>
<keyword id="KW-0067">ATP-binding</keyword>
<keyword id="KW-0963">Cytoplasm</keyword>
<keyword id="KW-0227">DNA damage</keyword>
<keyword id="KW-0234">DNA repair</keyword>
<keyword id="KW-0235">DNA replication</keyword>
<keyword id="KW-0238">DNA-binding</keyword>
<keyword id="KW-0547">Nucleotide-binding</keyword>
<keyword id="KW-0742">SOS response</keyword>
<sequence>MAIARLIVENFRNISAVDLEFDHGFNFLVGNNGSGKTSLLEALFYLGHGRSFKSSVTTRVIRYDQPHFTLHGRIRELQHEWSVGLQKQRKDGNTIVKINGEDGNKISDLAHLLPMQIITPEGLTLLNGGPSYRRAFLDWGLFHHQPNFHSAWSALHRLLKQRNAALNQTYDYNMLKPWDMELAKLAHQVSQWRADYAEALSPEIEQTCRLFLPELDIHVSFHQGWEKDTDYAQLLTENFERDKAIGYTVSGPQKADFRFKSNGLPVEDVLSRGQLKLLMCALRLAQGEHLMAQKNRHCIFLIDDFASELDETKRALLAQRLQNSNSQVFVTAISPEQLKQMQPEKHRTFQVVNGQIEQLL</sequence>
<comment type="function">
    <text evidence="1">The RecF protein is involved in DNA metabolism; it is required for DNA replication and normal SOS inducibility. RecF binds preferentially to single-stranded, linear DNA. It also seems to bind ATP.</text>
</comment>
<comment type="subcellular location">
    <subcellularLocation>
        <location evidence="1">Cytoplasm</location>
    </subcellularLocation>
</comment>
<comment type="similarity">
    <text evidence="1">Belongs to the RecF family.</text>
</comment>
<evidence type="ECO:0000255" key="1">
    <source>
        <dbReference type="HAMAP-Rule" id="MF_00365"/>
    </source>
</evidence>